<comment type="function">
    <text evidence="1">Attaches a formyl group to the free amino group of methionyl-tRNA(fMet). The formyl group appears to play a dual role in the initiator identity of N-formylmethionyl-tRNA by promoting its recognition by IF2 and preventing the misappropriation of this tRNA by the elongation apparatus.</text>
</comment>
<comment type="catalytic activity">
    <reaction evidence="1">
        <text>L-methionyl-tRNA(fMet) + (6R)-10-formyltetrahydrofolate = N-formyl-L-methionyl-tRNA(fMet) + (6S)-5,6,7,8-tetrahydrofolate + H(+)</text>
        <dbReference type="Rhea" id="RHEA:24380"/>
        <dbReference type="Rhea" id="RHEA-COMP:9952"/>
        <dbReference type="Rhea" id="RHEA-COMP:9953"/>
        <dbReference type="ChEBI" id="CHEBI:15378"/>
        <dbReference type="ChEBI" id="CHEBI:57453"/>
        <dbReference type="ChEBI" id="CHEBI:78530"/>
        <dbReference type="ChEBI" id="CHEBI:78844"/>
        <dbReference type="ChEBI" id="CHEBI:195366"/>
        <dbReference type="EC" id="2.1.2.9"/>
    </reaction>
</comment>
<comment type="similarity">
    <text evidence="1">Belongs to the Fmt family.</text>
</comment>
<accession>B2V969</accession>
<organism>
    <name type="scientific">Sulfurihydrogenibium sp. (strain YO3AOP1)</name>
    <dbReference type="NCBI Taxonomy" id="436114"/>
    <lineage>
        <taxon>Bacteria</taxon>
        <taxon>Pseudomonadati</taxon>
        <taxon>Aquificota</taxon>
        <taxon>Aquificia</taxon>
        <taxon>Aquificales</taxon>
        <taxon>Hydrogenothermaceae</taxon>
        <taxon>Sulfurihydrogenibium</taxon>
    </lineage>
</organism>
<name>FMT_SULSY</name>
<proteinExistence type="inferred from homology"/>
<keyword id="KW-0648">Protein biosynthesis</keyword>
<keyword id="KW-0808">Transferase</keyword>
<dbReference type="EC" id="2.1.2.9" evidence="1"/>
<dbReference type="EMBL" id="CP001080">
    <property type="protein sequence ID" value="ACD66492.1"/>
    <property type="molecule type" value="Genomic_DNA"/>
</dbReference>
<dbReference type="RefSeq" id="WP_012459566.1">
    <property type="nucleotide sequence ID" value="NC_010730.1"/>
</dbReference>
<dbReference type="SMR" id="B2V969"/>
<dbReference type="STRING" id="436114.SYO3AOP1_0864"/>
<dbReference type="KEGG" id="sul:SYO3AOP1_0864"/>
<dbReference type="eggNOG" id="COG0223">
    <property type="taxonomic scope" value="Bacteria"/>
</dbReference>
<dbReference type="HOGENOM" id="CLU_033347_1_1_0"/>
<dbReference type="GO" id="GO:0005829">
    <property type="term" value="C:cytosol"/>
    <property type="evidence" value="ECO:0007669"/>
    <property type="project" value="TreeGrafter"/>
</dbReference>
<dbReference type="GO" id="GO:0004479">
    <property type="term" value="F:methionyl-tRNA formyltransferase activity"/>
    <property type="evidence" value="ECO:0007669"/>
    <property type="project" value="UniProtKB-UniRule"/>
</dbReference>
<dbReference type="CDD" id="cd08646">
    <property type="entry name" value="FMT_core_Met-tRNA-FMT_N"/>
    <property type="match status" value="1"/>
</dbReference>
<dbReference type="CDD" id="cd08704">
    <property type="entry name" value="Met_tRNA_FMT_C"/>
    <property type="match status" value="1"/>
</dbReference>
<dbReference type="FunFam" id="3.40.50.12230:FF:000001">
    <property type="entry name" value="Methionyl-tRNA formyltransferase"/>
    <property type="match status" value="1"/>
</dbReference>
<dbReference type="Gene3D" id="3.40.50.12230">
    <property type="match status" value="1"/>
</dbReference>
<dbReference type="HAMAP" id="MF_00182">
    <property type="entry name" value="Formyl_trans"/>
    <property type="match status" value="1"/>
</dbReference>
<dbReference type="InterPro" id="IPR005794">
    <property type="entry name" value="Fmt"/>
</dbReference>
<dbReference type="InterPro" id="IPR005793">
    <property type="entry name" value="Formyl_trans_C"/>
</dbReference>
<dbReference type="InterPro" id="IPR002376">
    <property type="entry name" value="Formyl_transf_N"/>
</dbReference>
<dbReference type="InterPro" id="IPR036477">
    <property type="entry name" value="Formyl_transf_N_sf"/>
</dbReference>
<dbReference type="InterPro" id="IPR011034">
    <property type="entry name" value="Formyl_transferase-like_C_sf"/>
</dbReference>
<dbReference type="InterPro" id="IPR044135">
    <property type="entry name" value="Met-tRNA-FMT_C"/>
</dbReference>
<dbReference type="InterPro" id="IPR041711">
    <property type="entry name" value="Met-tRNA-FMT_N"/>
</dbReference>
<dbReference type="NCBIfam" id="TIGR00460">
    <property type="entry name" value="fmt"/>
    <property type="match status" value="1"/>
</dbReference>
<dbReference type="PANTHER" id="PTHR11138">
    <property type="entry name" value="METHIONYL-TRNA FORMYLTRANSFERASE"/>
    <property type="match status" value="1"/>
</dbReference>
<dbReference type="PANTHER" id="PTHR11138:SF5">
    <property type="entry name" value="METHIONYL-TRNA FORMYLTRANSFERASE, MITOCHONDRIAL"/>
    <property type="match status" value="1"/>
</dbReference>
<dbReference type="Pfam" id="PF02911">
    <property type="entry name" value="Formyl_trans_C"/>
    <property type="match status" value="1"/>
</dbReference>
<dbReference type="Pfam" id="PF00551">
    <property type="entry name" value="Formyl_trans_N"/>
    <property type="match status" value="1"/>
</dbReference>
<dbReference type="SUPFAM" id="SSF50486">
    <property type="entry name" value="FMT C-terminal domain-like"/>
    <property type="match status" value="1"/>
</dbReference>
<dbReference type="SUPFAM" id="SSF53328">
    <property type="entry name" value="Formyltransferase"/>
    <property type="match status" value="1"/>
</dbReference>
<reference key="1">
    <citation type="journal article" date="2009" name="J. Bacteriol.">
        <title>Complete and draft genome sequences of six members of the Aquificales.</title>
        <authorList>
            <person name="Reysenbach A.-L."/>
            <person name="Hamamura N."/>
            <person name="Podar M."/>
            <person name="Griffiths E."/>
            <person name="Ferreira S."/>
            <person name="Hochstein R."/>
            <person name="Heidelberg J."/>
            <person name="Johnson J."/>
            <person name="Mead D."/>
            <person name="Pohorille A."/>
            <person name="Sarmiento M."/>
            <person name="Schweighofer K."/>
            <person name="Seshadri R."/>
            <person name="Voytek M.A."/>
        </authorList>
    </citation>
    <scope>NUCLEOTIDE SEQUENCE [LARGE SCALE GENOMIC DNA]</scope>
    <source>
        <strain>YO3AOP1</strain>
    </source>
</reference>
<evidence type="ECO:0000255" key="1">
    <source>
        <dbReference type="HAMAP-Rule" id="MF_00182"/>
    </source>
</evidence>
<sequence length="311" mass="34979">MKVLFWGTPDFAVKSLKALIESNHQVVGVITQPDKPRGRGQKIQPTPVKEEALKHNIPVFQPEKIKNNQEILETIKKLNPDISVVVAYGKILPEEIINIPKYKTINVHASLLPEYRGAAPIQRAIMEGKDKTGVCIMEIIKELDAGDVYACREVEITEDDDIISLHDKLAEEGARLLIKVLDKIEKGEIDKKPQDHEKATYAKPIEKSEGKIDFSRSAKEIFNQIRALKVWPKAYAKFRDEEVKILDAKIVECNLNALPGEIIKADEKEGIVVKTGDGCLLLKIIQFPNSKPITTQDAIRGYKIKAGERFE</sequence>
<protein>
    <recommendedName>
        <fullName evidence="1">Methionyl-tRNA formyltransferase</fullName>
        <ecNumber evidence="1">2.1.2.9</ecNumber>
    </recommendedName>
</protein>
<feature type="chain" id="PRO_1000098452" description="Methionyl-tRNA formyltransferase">
    <location>
        <begin position="1"/>
        <end position="311"/>
    </location>
</feature>
<feature type="binding site" evidence="1">
    <location>
        <begin position="110"/>
        <end position="113"/>
    </location>
    <ligand>
        <name>(6S)-5,6,7,8-tetrahydrofolate</name>
        <dbReference type="ChEBI" id="CHEBI:57453"/>
    </ligand>
</feature>
<gene>
    <name evidence="1" type="primary">fmt</name>
    <name type="ordered locus">SYO3AOP1_0864</name>
</gene>